<protein>
    <recommendedName>
        <fullName>Metallothionein-1</fullName>
        <shortName>MT-1</shortName>
    </recommendedName>
    <alternativeName>
        <fullName>Metallothionein-I</fullName>
        <shortName>MT-I</shortName>
    </alternativeName>
</protein>
<name>MT1_CRIGR</name>
<gene>
    <name type="primary">MT1</name>
</gene>
<keyword id="KW-0007">Acetylation</keyword>
<keyword id="KW-0479">Metal-binding</keyword>
<keyword id="KW-0480">Metal-thiolate cluster</keyword>
<sequence length="61" mass="6051">MDPNCSCSTGSTCTCSSSCGCKDCKCTSCKKSCCSCCPVGCSKCAQGCVCKGASDKCTCCA</sequence>
<feature type="chain" id="PRO_0000197200" description="Metallothionein-1">
    <location>
        <begin position="1"/>
        <end position="61"/>
    </location>
</feature>
<feature type="region of interest" description="Beta">
    <location>
        <begin position="1"/>
        <end position="29"/>
    </location>
</feature>
<feature type="region of interest" description="Alpha">
    <location>
        <begin position="30"/>
        <end position="61"/>
    </location>
</feature>
<feature type="binding site" evidence="1">
    <location>
        <position position="5"/>
    </location>
    <ligand>
        <name>a divalent metal cation</name>
        <dbReference type="ChEBI" id="CHEBI:60240"/>
        <label>1</label>
        <note>in cluster B</note>
    </ligand>
</feature>
<feature type="binding site" evidence="1">
    <location>
        <position position="7"/>
    </location>
    <ligand>
        <name>a divalent metal cation</name>
        <dbReference type="ChEBI" id="CHEBI:60240"/>
        <label>1</label>
        <note>in cluster B</note>
    </ligand>
</feature>
<feature type="binding site" evidence="1">
    <location>
        <position position="7"/>
    </location>
    <ligand>
        <name>a divalent metal cation</name>
        <dbReference type="ChEBI" id="CHEBI:60240"/>
        <label>2</label>
        <note>in cluster B</note>
    </ligand>
</feature>
<feature type="binding site" evidence="1">
    <location>
        <position position="13"/>
    </location>
    <ligand>
        <name>a divalent metal cation</name>
        <dbReference type="ChEBI" id="CHEBI:60240"/>
        <label>2</label>
        <note>in cluster B</note>
    </ligand>
</feature>
<feature type="binding site" evidence="1">
    <location>
        <position position="15"/>
    </location>
    <ligand>
        <name>a divalent metal cation</name>
        <dbReference type="ChEBI" id="CHEBI:60240"/>
        <label>2</label>
        <note>in cluster B</note>
    </ligand>
</feature>
<feature type="binding site" evidence="1">
    <location>
        <position position="15"/>
    </location>
    <ligand>
        <name>a divalent metal cation</name>
        <dbReference type="ChEBI" id="CHEBI:60240"/>
        <label>3</label>
        <note>in cluster B</note>
    </ligand>
</feature>
<feature type="binding site" evidence="1">
    <location>
        <position position="19"/>
    </location>
    <ligand>
        <name>a divalent metal cation</name>
        <dbReference type="ChEBI" id="CHEBI:60240"/>
        <label>3</label>
        <note>in cluster B</note>
    </ligand>
</feature>
<feature type="binding site" evidence="1">
    <location>
        <position position="21"/>
    </location>
    <ligand>
        <name>a divalent metal cation</name>
        <dbReference type="ChEBI" id="CHEBI:60240"/>
        <label>1</label>
        <note>in cluster B</note>
    </ligand>
</feature>
<feature type="binding site" evidence="1">
    <location>
        <position position="24"/>
    </location>
    <ligand>
        <name>a divalent metal cation</name>
        <dbReference type="ChEBI" id="CHEBI:60240"/>
        <label>1</label>
        <note>in cluster B</note>
    </ligand>
</feature>
<feature type="binding site" evidence="1">
    <location>
        <position position="24"/>
    </location>
    <ligand>
        <name>a divalent metal cation</name>
        <dbReference type="ChEBI" id="CHEBI:60240"/>
        <label>3</label>
        <note>in cluster B</note>
    </ligand>
</feature>
<feature type="binding site" evidence="1">
    <location>
        <position position="26"/>
    </location>
    <ligand>
        <name>a divalent metal cation</name>
        <dbReference type="ChEBI" id="CHEBI:60240"/>
        <label>2</label>
        <note>in cluster B</note>
    </ligand>
</feature>
<feature type="binding site" evidence="1">
    <location>
        <position position="29"/>
    </location>
    <ligand>
        <name>a divalent metal cation</name>
        <dbReference type="ChEBI" id="CHEBI:60240"/>
        <label>3</label>
        <note>in cluster B</note>
    </ligand>
</feature>
<feature type="binding site" evidence="1">
    <location>
        <position position="33"/>
    </location>
    <ligand>
        <name>a divalent metal cation</name>
        <dbReference type="ChEBI" id="CHEBI:60240"/>
        <label>4</label>
        <note>in cluster A</note>
    </ligand>
</feature>
<feature type="binding site" evidence="1">
    <location>
        <position position="34"/>
    </location>
    <ligand>
        <name>a divalent metal cation</name>
        <dbReference type="ChEBI" id="CHEBI:60240"/>
        <label>4</label>
        <note>in cluster A</note>
    </ligand>
</feature>
<feature type="binding site" evidence="1">
    <location>
        <position position="34"/>
    </location>
    <ligand>
        <name>a divalent metal cation</name>
        <dbReference type="ChEBI" id="CHEBI:60240"/>
        <label>5</label>
        <note>in cluster A</note>
    </ligand>
</feature>
<feature type="binding site" evidence="1">
    <location>
        <position position="36"/>
    </location>
    <ligand>
        <name>a divalent metal cation</name>
        <dbReference type="ChEBI" id="CHEBI:60240"/>
        <label>5</label>
        <note>in cluster A</note>
    </ligand>
</feature>
<feature type="binding site" evidence="1">
    <location>
        <position position="37"/>
    </location>
    <ligand>
        <name>a divalent metal cation</name>
        <dbReference type="ChEBI" id="CHEBI:60240"/>
        <label>5</label>
        <note>in cluster A</note>
    </ligand>
</feature>
<feature type="binding site" evidence="1">
    <location>
        <position position="37"/>
    </location>
    <ligand>
        <name>a divalent metal cation</name>
        <dbReference type="ChEBI" id="CHEBI:60240"/>
        <label>6</label>
        <note>in cluster A</note>
    </ligand>
</feature>
<feature type="binding site" evidence="1">
    <location>
        <position position="41"/>
    </location>
    <ligand>
        <name>a divalent metal cation</name>
        <dbReference type="ChEBI" id="CHEBI:60240"/>
        <label>6</label>
        <note>in cluster A</note>
    </ligand>
</feature>
<feature type="binding site" evidence="1">
    <location>
        <position position="44"/>
    </location>
    <ligand>
        <name>a divalent metal cation</name>
        <dbReference type="ChEBI" id="CHEBI:60240"/>
        <label>4</label>
        <note>in cluster A</note>
    </ligand>
</feature>
<feature type="binding site" evidence="1">
    <location>
        <position position="44"/>
    </location>
    <ligand>
        <name>a divalent metal cation</name>
        <dbReference type="ChEBI" id="CHEBI:60240"/>
        <label>6</label>
        <note>in cluster A</note>
    </ligand>
</feature>
<feature type="binding site" evidence="1">
    <location>
        <position position="48"/>
    </location>
    <ligand>
        <name>a divalent metal cation</name>
        <dbReference type="ChEBI" id="CHEBI:60240"/>
        <label>4</label>
        <note>in cluster A</note>
    </ligand>
</feature>
<feature type="binding site" evidence="1">
    <location>
        <position position="50"/>
    </location>
    <ligand>
        <name>a divalent metal cation</name>
        <dbReference type="ChEBI" id="CHEBI:60240"/>
        <label>5</label>
        <note>in cluster A</note>
    </ligand>
</feature>
<feature type="binding site" evidence="1">
    <location>
        <position position="50"/>
    </location>
    <ligand>
        <name>a divalent metal cation</name>
        <dbReference type="ChEBI" id="CHEBI:60240"/>
        <label>7</label>
        <note>in cluster A</note>
    </ligand>
</feature>
<feature type="binding site" evidence="1">
    <location>
        <position position="57"/>
    </location>
    <ligand>
        <name>a divalent metal cation</name>
        <dbReference type="ChEBI" id="CHEBI:60240"/>
        <label>7</label>
        <note>in cluster A</note>
    </ligand>
</feature>
<feature type="binding site" evidence="1">
    <location>
        <position position="59"/>
    </location>
    <ligand>
        <name>a divalent metal cation</name>
        <dbReference type="ChEBI" id="CHEBI:60240"/>
        <label>7</label>
        <note>in cluster A</note>
    </ligand>
</feature>
<feature type="binding site" evidence="1">
    <location>
        <position position="60"/>
    </location>
    <ligand>
        <name>a divalent metal cation</name>
        <dbReference type="ChEBI" id="CHEBI:60240"/>
        <label>6</label>
        <note>in cluster A</note>
    </ligand>
</feature>
<feature type="binding site" evidence="1">
    <location>
        <position position="60"/>
    </location>
    <ligand>
        <name>a divalent metal cation</name>
        <dbReference type="ChEBI" id="CHEBI:60240"/>
        <label>7</label>
        <note>in cluster A</note>
    </ligand>
</feature>
<feature type="modified residue" description="N-acetylmethionine" evidence="2">
    <location>
        <position position="1"/>
    </location>
</feature>
<evidence type="ECO:0000250" key="1">
    <source>
        <dbReference type="UniProtKB" id="P02795"/>
    </source>
</evidence>
<evidence type="ECO:0000250" key="2">
    <source>
        <dbReference type="UniProtKB" id="P02802"/>
    </source>
</evidence>
<evidence type="ECO:0000305" key="3"/>
<reference key="1">
    <citation type="journal article" date="1990" name="Nucleic Acids Res.">
        <title>Genomic sequence of the Chinese hamster MT I gene.</title>
        <authorList>
            <person name="Grady D.L."/>
            <person name="Robinson D.L."/>
            <person name="Hildebrand C.E."/>
        </authorList>
    </citation>
    <scope>NUCLEOTIDE SEQUENCE [GENOMIC DNA]</scope>
</reference>
<reference key="2">
    <citation type="journal article" date="1983" name="Nucleic Acids Res.">
        <title>cDNA cloning and nucleotide sequence comparison of Chinese hamster metallothionein I and II mRNAs.</title>
        <authorList>
            <person name="Griffith B.B."/>
            <person name="Walters R.A."/>
            <person name="Enger M.D."/>
            <person name="Hildebrand C.E."/>
            <person name="Griffith J.K."/>
        </authorList>
    </citation>
    <scope>NUCLEOTIDE SEQUENCE [MRNA]</scope>
</reference>
<reference key="3">
    <citation type="journal article" date="1994" name="Biochim. Biophys. Acta">
        <title>Sequence homology of Chinese hamster metallothionein genes I and II to those of the mouse and rat, and their amplification in Cd-resistant cells.</title>
        <authorList>
            <person name="Yamada K."/>
            <person name="Kato H."/>
            <person name="Kanda N."/>
            <person name="Fujii-Kuriyama Y."/>
            <person name="Utakoji T."/>
            <person name="Itoh R."/>
        </authorList>
    </citation>
    <scope>NUCLEOTIDE SEQUENCE [GENOMIC DNA]</scope>
    <source>
        <tissue>Lung</tissue>
    </source>
</reference>
<comment type="function">
    <text>Metallothioneins have a high content of cysteine residues that bind various heavy metals; these proteins are transcriptionally regulated by both heavy metals and glucocorticoids.</text>
</comment>
<comment type="domain">
    <text>Class I metallothioneins contain 2 metal-binding domains: four divalent ions are chelated within cluster A of the alpha domain and are coordinated via cysteinyl thiolate bridges to 11 cysteine ligands. Cluster B, the corresponding region within the beta domain, can ligate three divalent ions to 9 cysteines.</text>
</comment>
<comment type="similarity">
    <text evidence="3">Belongs to the metallothionein superfamily. Type 1 family.</text>
</comment>
<proteinExistence type="inferred from homology"/>
<organism>
    <name type="scientific">Cricetulus griseus</name>
    <name type="common">Chinese hamster</name>
    <name type="synonym">Cricetulus barabensis griseus</name>
    <dbReference type="NCBI Taxonomy" id="10029"/>
    <lineage>
        <taxon>Eukaryota</taxon>
        <taxon>Metazoa</taxon>
        <taxon>Chordata</taxon>
        <taxon>Craniata</taxon>
        <taxon>Vertebrata</taxon>
        <taxon>Euteleostomi</taxon>
        <taxon>Mammalia</taxon>
        <taxon>Eutheria</taxon>
        <taxon>Euarchontoglires</taxon>
        <taxon>Glires</taxon>
        <taxon>Rodentia</taxon>
        <taxon>Myomorpha</taxon>
        <taxon>Muroidea</taxon>
        <taxon>Cricetidae</taxon>
        <taxon>Cricetinae</taxon>
        <taxon>Cricetulus</taxon>
    </lineage>
</organism>
<dbReference type="EMBL" id="J00061">
    <property type="protein sequence ID" value="AAA36996.1"/>
    <property type="molecule type" value="mRNA"/>
</dbReference>
<dbReference type="EMBL" id="D10551">
    <property type="protein sequence ID" value="BAA01408.1"/>
    <property type="molecule type" value="Genomic_DNA"/>
</dbReference>
<dbReference type="EMBL" id="X55064">
    <property type="protein sequence ID" value="CAA38897.1"/>
    <property type="molecule type" value="Genomic_DNA"/>
</dbReference>
<dbReference type="PIR" id="A03282">
    <property type="entry name" value="SMHY1C"/>
</dbReference>
<dbReference type="RefSeq" id="NP_001231505.1">
    <property type="nucleotide sequence ID" value="NM_001244576.1"/>
</dbReference>
<dbReference type="SMR" id="P02804"/>
<dbReference type="PaxDb" id="10029-NP_001231505.1"/>
<dbReference type="Ensembl" id="ENSCGRT00001029752.1">
    <property type="protein sequence ID" value="ENSCGRP00001025506.1"/>
    <property type="gene ID" value="ENSCGRG00001023092.1"/>
</dbReference>
<dbReference type="GeneID" id="100689478"/>
<dbReference type="KEGG" id="cge:100689478"/>
<dbReference type="CTD" id="17748"/>
<dbReference type="eggNOG" id="KOG4738">
    <property type="taxonomic scope" value="Eukaryota"/>
</dbReference>
<dbReference type="GeneTree" id="ENSGT00950000182967"/>
<dbReference type="OMA" id="SEDCSCF"/>
<dbReference type="Proteomes" id="UP000694386">
    <property type="component" value="Unplaced"/>
</dbReference>
<dbReference type="Proteomes" id="UP001108280">
    <property type="component" value="Chromosome 3"/>
</dbReference>
<dbReference type="GO" id="GO:0005737">
    <property type="term" value="C:cytoplasm"/>
    <property type="evidence" value="ECO:0000250"/>
    <property type="project" value="UniProtKB"/>
</dbReference>
<dbReference type="GO" id="GO:0005634">
    <property type="term" value="C:nucleus"/>
    <property type="evidence" value="ECO:0000250"/>
    <property type="project" value="UniProtKB"/>
</dbReference>
<dbReference type="GO" id="GO:0008270">
    <property type="term" value="F:zinc ion binding"/>
    <property type="evidence" value="ECO:0000250"/>
    <property type="project" value="UniProtKB"/>
</dbReference>
<dbReference type="GO" id="GO:0071276">
    <property type="term" value="P:cellular response to cadmium ion"/>
    <property type="evidence" value="ECO:0007669"/>
    <property type="project" value="TreeGrafter"/>
</dbReference>
<dbReference type="GO" id="GO:0071280">
    <property type="term" value="P:cellular response to copper ion"/>
    <property type="evidence" value="ECO:0007669"/>
    <property type="project" value="TreeGrafter"/>
</dbReference>
<dbReference type="GO" id="GO:0071294">
    <property type="term" value="P:cellular response to zinc ion"/>
    <property type="evidence" value="ECO:0000250"/>
    <property type="project" value="UniProtKB"/>
</dbReference>
<dbReference type="GO" id="GO:0010273">
    <property type="term" value="P:detoxification of copper ion"/>
    <property type="evidence" value="ECO:0007669"/>
    <property type="project" value="TreeGrafter"/>
</dbReference>
<dbReference type="GO" id="GO:0006882">
    <property type="term" value="P:intracellular zinc ion homeostasis"/>
    <property type="evidence" value="ECO:0007669"/>
    <property type="project" value="TreeGrafter"/>
</dbReference>
<dbReference type="GO" id="GO:0045926">
    <property type="term" value="P:negative regulation of growth"/>
    <property type="evidence" value="ECO:0000250"/>
    <property type="project" value="UniProtKB"/>
</dbReference>
<dbReference type="FunFam" id="4.10.10.10:FF:000001">
    <property type="entry name" value="Metallothionein"/>
    <property type="match status" value="1"/>
</dbReference>
<dbReference type="Gene3D" id="4.10.10.10">
    <property type="entry name" value="Metallothionein Isoform II"/>
    <property type="match status" value="1"/>
</dbReference>
<dbReference type="InterPro" id="IPR017854">
    <property type="entry name" value="Metalthion_dom_sf"/>
</dbReference>
<dbReference type="InterPro" id="IPR023587">
    <property type="entry name" value="Metalthion_dom_sf_vert"/>
</dbReference>
<dbReference type="InterPro" id="IPR000006">
    <property type="entry name" value="Metalthion_vert"/>
</dbReference>
<dbReference type="InterPro" id="IPR018064">
    <property type="entry name" value="Metalthion_vert_metal_BS"/>
</dbReference>
<dbReference type="PANTHER" id="PTHR23299">
    <property type="entry name" value="METALLOTHIONEIN"/>
    <property type="match status" value="1"/>
</dbReference>
<dbReference type="PANTHER" id="PTHR23299:SF55">
    <property type="entry name" value="METALLOTHIONEIN-1F"/>
    <property type="match status" value="1"/>
</dbReference>
<dbReference type="Pfam" id="PF00131">
    <property type="entry name" value="Metallothio"/>
    <property type="match status" value="1"/>
</dbReference>
<dbReference type="PRINTS" id="PR00860">
    <property type="entry name" value="MTVERTEBRATE"/>
</dbReference>
<dbReference type="SUPFAM" id="SSF57868">
    <property type="entry name" value="Metallothionein"/>
    <property type="match status" value="1"/>
</dbReference>
<dbReference type="PROSITE" id="PS00203">
    <property type="entry name" value="METALLOTHIONEIN_VRT"/>
    <property type="match status" value="1"/>
</dbReference>
<accession>P02804</accession>